<gene>
    <name evidence="1" type="primary">gch3</name>
    <name type="ordered locus">Tneu_1743</name>
</gene>
<proteinExistence type="inferred from homology"/>
<reference key="1">
    <citation type="submission" date="2008-03" db="EMBL/GenBank/DDBJ databases">
        <title>Complete sequence of Thermoproteus neutrophilus V24Sta.</title>
        <authorList>
            <consortium name="US DOE Joint Genome Institute"/>
            <person name="Copeland A."/>
            <person name="Lucas S."/>
            <person name="Lapidus A."/>
            <person name="Glavina del Rio T."/>
            <person name="Dalin E."/>
            <person name="Tice H."/>
            <person name="Bruce D."/>
            <person name="Goodwin L."/>
            <person name="Pitluck S."/>
            <person name="Sims D."/>
            <person name="Brettin T."/>
            <person name="Detter J.C."/>
            <person name="Han C."/>
            <person name="Kuske C.R."/>
            <person name="Schmutz J."/>
            <person name="Larimer F."/>
            <person name="Land M."/>
            <person name="Hauser L."/>
            <person name="Kyrpides N."/>
            <person name="Mikhailova N."/>
            <person name="Biddle J.F."/>
            <person name="Zhang Z."/>
            <person name="Fitz-Gibbon S.T."/>
            <person name="Lowe T.M."/>
            <person name="Saltikov C."/>
            <person name="House C.H."/>
            <person name="Richardson P."/>
        </authorList>
    </citation>
    <scope>NUCLEOTIDE SEQUENCE [LARGE SCALE GENOMIC DNA]</scope>
    <source>
        <strain>DSM 2338 / JCM 9278 / NBRC 100436 / V24Sta</strain>
    </source>
</reference>
<organism>
    <name type="scientific">Pyrobaculum neutrophilum (strain DSM 2338 / JCM 9278 / NBRC 100436 / V24Sta)</name>
    <name type="common">Thermoproteus neutrophilus</name>
    <dbReference type="NCBI Taxonomy" id="444157"/>
    <lineage>
        <taxon>Archaea</taxon>
        <taxon>Thermoproteota</taxon>
        <taxon>Thermoprotei</taxon>
        <taxon>Thermoproteales</taxon>
        <taxon>Thermoproteaceae</taxon>
        <taxon>Pyrobaculum</taxon>
    </lineage>
</organism>
<evidence type="ECO:0000255" key="1">
    <source>
        <dbReference type="HAMAP-Rule" id="MF_00608"/>
    </source>
</evidence>
<accession>B1YAW1</accession>
<dbReference type="EC" id="3.5.4.29" evidence="1"/>
<dbReference type="EMBL" id="CP001014">
    <property type="protein sequence ID" value="ACB40661.1"/>
    <property type="molecule type" value="Genomic_DNA"/>
</dbReference>
<dbReference type="RefSeq" id="WP_012351080.1">
    <property type="nucleotide sequence ID" value="NC_010525.1"/>
</dbReference>
<dbReference type="SMR" id="B1YAW1"/>
<dbReference type="STRING" id="444157.Tneu_1743"/>
<dbReference type="GeneID" id="6165323"/>
<dbReference type="KEGG" id="tne:Tneu_1743"/>
<dbReference type="eggNOG" id="arCOG04202">
    <property type="taxonomic scope" value="Archaea"/>
</dbReference>
<dbReference type="HOGENOM" id="CLU_080076_0_0_2"/>
<dbReference type="OrthoDB" id="25211at2157"/>
<dbReference type="Proteomes" id="UP000001694">
    <property type="component" value="Chromosome"/>
</dbReference>
<dbReference type="GO" id="GO:0005525">
    <property type="term" value="F:GTP binding"/>
    <property type="evidence" value="ECO:0007669"/>
    <property type="project" value="UniProtKB-KW"/>
</dbReference>
<dbReference type="GO" id="GO:0043740">
    <property type="term" value="F:GTP cyclohydrolase IIa activity"/>
    <property type="evidence" value="ECO:0007669"/>
    <property type="project" value="UniProtKB-EC"/>
</dbReference>
<dbReference type="GO" id="GO:0009058">
    <property type="term" value="P:biosynthetic process"/>
    <property type="evidence" value="ECO:0007669"/>
    <property type="project" value="InterPro"/>
</dbReference>
<dbReference type="Gene3D" id="3.30.70.270">
    <property type="match status" value="1"/>
</dbReference>
<dbReference type="Gene3D" id="3.30.70.1230">
    <property type="entry name" value="Nucleotide cyclase"/>
    <property type="match status" value="1"/>
</dbReference>
<dbReference type="HAMAP" id="MF_00608">
    <property type="entry name" value="GTP_cyclohydro_3"/>
    <property type="match status" value="1"/>
</dbReference>
<dbReference type="InterPro" id="IPR007839">
    <property type="entry name" value="GTP_CycHdrlase_3"/>
</dbReference>
<dbReference type="InterPro" id="IPR029787">
    <property type="entry name" value="Nucleotide_cyclase"/>
</dbReference>
<dbReference type="InterPro" id="IPR043128">
    <property type="entry name" value="Rev_trsase/Diguanyl_cyclase"/>
</dbReference>
<dbReference type="PANTHER" id="PTHR42202">
    <property type="entry name" value="GTP CYCLOHYDROLASE III"/>
    <property type="match status" value="1"/>
</dbReference>
<dbReference type="PANTHER" id="PTHR42202:SF1">
    <property type="entry name" value="GTP CYCLOHYDROLASE III"/>
    <property type="match status" value="1"/>
</dbReference>
<dbReference type="Pfam" id="PF05165">
    <property type="entry name" value="GCH_III"/>
    <property type="match status" value="2"/>
</dbReference>
<dbReference type="PIRSF" id="PIRSF009265">
    <property type="entry name" value="GTP_cyclohydro_3"/>
    <property type="match status" value="1"/>
</dbReference>
<sequence>MHGVVVVELKGYREWTESLGPRREHIIQQVQSRIQAAVWRSFTAVGALPHHFRYDFYIALVNGVSLDLVKRAVEKAARASPVGAGFCLGVGETPYEAYLRCGGGGGGAASPAVVAHMDVINSTEATRRNGPLDVYLKVVKLLGQLGERCKDLGCMAFYLGGDNIALFLPSPNAIYSILDGVDLRVRVGVGVAKRPYNAFVRATWALDRLRSAGREGVEVVK</sequence>
<name>GCH3_PYRNV</name>
<protein>
    <recommendedName>
        <fullName evidence="1">GTP cyclohydrolase III</fullName>
        <ecNumber evidence="1">3.5.4.29</ecNumber>
    </recommendedName>
</protein>
<feature type="chain" id="PRO_1000147165" description="GTP cyclohydrolase III">
    <location>
        <begin position="1"/>
        <end position="221"/>
    </location>
</feature>
<comment type="function">
    <text evidence="1">Catalyzes the formation of 2-amino-5-formylamino-6-ribofuranosylamino-4(3H)-pyrimidinone ribonucleotide monophosphate and inorganic phosphate from GTP. Also has an independent pyrophosphate phosphohydrolase activity.</text>
</comment>
<comment type="catalytic activity">
    <reaction evidence="1">
        <text>GTP + 3 H2O = 2-amino-5-formylamino-6-(5-phospho-D-ribosylamino)pyrimidin-4(3H)-one + 2 phosphate + 2 H(+)</text>
        <dbReference type="Rhea" id="RHEA:22468"/>
        <dbReference type="ChEBI" id="CHEBI:15377"/>
        <dbReference type="ChEBI" id="CHEBI:15378"/>
        <dbReference type="ChEBI" id="CHEBI:37565"/>
        <dbReference type="ChEBI" id="CHEBI:43474"/>
        <dbReference type="ChEBI" id="CHEBI:57258"/>
        <dbReference type="EC" id="3.5.4.29"/>
    </reaction>
</comment>
<comment type="similarity">
    <text evidence="1">Belongs to the archaeal-type GTP cyclohydrolase family.</text>
</comment>
<keyword id="KW-0342">GTP-binding</keyword>
<keyword id="KW-0378">Hydrolase</keyword>
<keyword id="KW-0547">Nucleotide-binding</keyword>